<organism>
    <name type="scientific">Schizosaccharomyces pombe (strain 972 / ATCC 24843)</name>
    <name type="common">Fission yeast</name>
    <dbReference type="NCBI Taxonomy" id="284812"/>
    <lineage>
        <taxon>Eukaryota</taxon>
        <taxon>Fungi</taxon>
        <taxon>Dikarya</taxon>
        <taxon>Ascomycota</taxon>
        <taxon>Taphrinomycotina</taxon>
        <taxon>Schizosaccharomycetes</taxon>
        <taxon>Schizosaccharomycetales</taxon>
        <taxon>Schizosaccharomycetaceae</taxon>
        <taxon>Schizosaccharomyces</taxon>
    </lineage>
</organism>
<proteinExistence type="predicted"/>
<keyword id="KW-0963">Cytoplasm</keyword>
<keyword id="KW-0539">Nucleus</keyword>
<keyword id="KW-1185">Reference proteome</keyword>
<protein>
    <recommendedName>
        <fullName>Uncharacterized ubiquitin-like protein C800.12c</fullName>
    </recommendedName>
</protein>
<accession>Q9HGL0</accession>
<dbReference type="EMBL" id="CU329671">
    <property type="protein sequence ID" value="CAC01527.1"/>
    <property type="molecule type" value="Genomic_DNA"/>
</dbReference>
<dbReference type="RefSeq" id="NP_595114.1">
    <property type="nucleotide sequence ID" value="NM_001021021.2"/>
</dbReference>
<dbReference type="SMR" id="Q9HGL0"/>
<dbReference type="BioGRID" id="277326">
    <property type="interactions" value="1"/>
</dbReference>
<dbReference type="FunCoup" id="Q9HGL0">
    <property type="interactions" value="1"/>
</dbReference>
<dbReference type="iPTMnet" id="Q9HGL0"/>
<dbReference type="PaxDb" id="4896-SPBC800.12c.1"/>
<dbReference type="EnsemblFungi" id="SPBC800.12c.1">
    <property type="protein sequence ID" value="SPBC800.12c.1:pep"/>
    <property type="gene ID" value="SPBC800.12c"/>
</dbReference>
<dbReference type="PomBase" id="SPBC800.12c"/>
<dbReference type="VEuPathDB" id="FungiDB:SPBC800.12c"/>
<dbReference type="HOGENOM" id="CLU_1876626_0_0_1"/>
<dbReference type="InParanoid" id="Q9HGL0"/>
<dbReference type="OMA" id="MFLMNIS"/>
<dbReference type="PRO" id="PR:Q9HGL0"/>
<dbReference type="Proteomes" id="UP000002485">
    <property type="component" value="Chromosome II"/>
</dbReference>
<dbReference type="GO" id="GO:0005829">
    <property type="term" value="C:cytosol"/>
    <property type="evidence" value="ECO:0007005"/>
    <property type="project" value="PomBase"/>
</dbReference>
<dbReference type="GO" id="GO:0005634">
    <property type="term" value="C:nucleus"/>
    <property type="evidence" value="ECO:0007005"/>
    <property type="project" value="PomBase"/>
</dbReference>
<dbReference type="CDD" id="cd17039">
    <property type="entry name" value="Ubl_ubiquitin_like"/>
    <property type="match status" value="1"/>
</dbReference>
<dbReference type="FunFam" id="3.10.20.90:FF:000426">
    <property type="entry name" value="Ubiquitin and WLM domain-containing metalloprotease SPCC1442.07c"/>
    <property type="match status" value="1"/>
</dbReference>
<dbReference type="Gene3D" id="3.10.20.90">
    <property type="entry name" value="Phosphatidylinositol 3-kinase Catalytic Subunit, Chain A, domain 1"/>
    <property type="match status" value="1"/>
</dbReference>
<dbReference type="InterPro" id="IPR000626">
    <property type="entry name" value="Ubiquitin-like_dom"/>
</dbReference>
<dbReference type="InterPro" id="IPR029071">
    <property type="entry name" value="Ubiquitin-like_domsf"/>
</dbReference>
<dbReference type="Pfam" id="PF00240">
    <property type="entry name" value="ubiquitin"/>
    <property type="match status" value="1"/>
</dbReference>
<dbReference type="SUPFAM" id="SSF54236">
    <property type="entry name" value="Ubiquitin-like"/>
    <property type="match status" value="1"/>
</dbReference>
<dbReference type="PROSITE" id="PS50053">
    <property type="entry name" value="UBIQUITIN_2"/>
    <property type="match status" value="1"/>
</dbReference>
<comment type="subcellular location">
    <subcellularLocation>
        <location evidence="2">Cytoplasm</location>
    </subcellularLocation>
    <subcellularLocation>
        <location evidence="2">Nucleus</location>
    </subcellularLocation>
</comment>
<feature type="chain" id="PRO_0000310775" description="Uncharacterized ubiquitin-like protein C800.12c">
    <location>
        <begin position="1"/>
        <end position="137"/>
    </location>
</feature>
<feature type="domain" description="Ubiquitin-like" evidence="1">
    <location>
        <begin position="58"/>
        <end position="135"/>
    </location>
</feature>
<gene>
    <name type="ORF">SPBC800.12c</name>
</gene>
<sequence>MSEVQIVKSFLEELSKTPRNHPDSIPIEKIDETAISITIPAPLVEFQGNLALFEEKKVHVVAKTVRPPIQQASTEINVQSTILELKEVLASQLSTQPSSIRLMYKGKPLVNSRLLDDYVDADSVSEVNLQMFLMNIS</sequence>
<name>YHLC_SCHPO</name>
<evidence type="ECO:0000255" key="1">
    <source>
        <dbReference type="PROSITE-ProRule" id="PRU00214"/>
    </source>
</evidence>
<evidence type="ECO:0000269" key="2">
    <source>
    </source>
</evidence>
<reference key="1">
    <citation type="journal article" date="2002" name="Nature">
        <title>The genome sequence of Schizosaccharomyces pombe.</title>
        <authorList>
            <person name="Wood V."/>
            <person name="Gwilliam R."/>
            <person name="Rajandream M.A."/>
            <person name="Lyne M.H."/>
            <person name="Lyne R."/>
            <person name="Stewart A."/>
            <person name="Sgouros J.G."/>
            <person name="Peat N."/>
            <person name="Hayles J."/>
            <person name="Baker S.G."/>
            <person name="Basham D."/>
            <person name="Bowman S."/>
            <person name="Brooks K."/>
            <person name="Brown D."/>
            <person name="Brown S."/>
            <person name="Chillingworth T."/>
            <person name="Churcher C.M."/>
            <person name="Collins M."/>
            <person name="Connor R."/>
            <person name="Cronin A."/>
            <person name="Davis P."/>
            <person name="Feltwell T."/>
            <person name="Fraser A."/>
            <person name="Gentles S."/>
            <person name="Goble A."/>
            <person name="Hamlin N."/>
            <person name="Harris D.E."/>
            <person name="Hidalgo J."/>
            <person name="Hodgson G."/>
            <person name="Holroyd S."/>
            <person name="Hornsby T."/>
            <person name="Howarth S."/>
            <person name="Huckle E.J."/>
            <person name="Hunt S."/>
            <person name="Jagels K."/>
            <person name="James K.D."/>
            <person name="Jones L."/>
            <person name="Jones M."/>
            <person name="Leather S."/>
            <person name="McDonald S."/>
            <person name="McLean J."/>
            <person name="Mooney P."/>
            <person name="Moule S."/>
            <person name="Mungall K.L."/>
            <person name="Murphy L.D."/>
            <person name="Niblett D."/>
            <person name="Odell C."/>
            <person name="Oliver K."/>
            <person name="O'Neil S."/>
            <person name="Pearson D."/>
            <person name="Quail M.A."/>
            <person name="Rabbinowitsch E."/>
            <person name="Rutherford K.M."/>
            <person name="Rutter S."/>
            <person name="Saunders D."/>
            <person name="Seeger K."/>
            <person name="Sharp S."/>
            <person name="Skelton J."/>
            <person name="Simmonds M.N."/>
            <person name="Squares R."/>
            <person name="Squares S."/>
            <person name="Stevens K."/>
            <person name="Taylor K."/>
            <person name="Taylor R.G."/>
            <person name="Tivey A."/>
            <person name="Walsh S.V."/>
            <person name="Warren T."/>
            <person name="Whitehead S."/>
            <person name="Woodward J.R."/>
            <person name="Volckaert G."/>
            <person name="Aert R."/>
            <person name="Robben J."/>
            <person name="Grymonprez B."/>
            <person name="Weltjens I."/>
            <person name="Vanstreels E."/>
            <person name="Rieger M."/>
            <person name="Schaefer M."/>
            <person name="Mueller-Auer S."/>
            <person name="Gabel C."/>
            <person name="Fuchs M."/>
            <person name="Duesterhoeft A."/>
            <person name="Fritzc C."/>
            <person name="Holzer E."/>
            <person name="Moestl D."/>
            <person name="Hilbert H."/>
            <person name="Borzym K."/>
            <person name="Langer I."/>
            <person name="Beck A."/>
            <person name="Lehrach H."/>
            <person name="Reinhardt R."/>
            <person name="Pohl T.M."/>
            <person name="Eger P."/>
            <person name="Zimmermann W."/>
            <person name="Wedler H."/>
            <person name="Wambutt R."/>
            <person name="Purnelle B."/>
            <person name="Goffeau A."/>
            <person name="Cadieu E."/>
            <person name="Dreano S."/>
            <person name="Gloux S."/>
            <person name="Lelaure V."/>
            <person name="Mottier S."/>
            <person name="Galibert F."/>
            <person name="Aves S.J."/>
            <person name="Xiang Z."/>
            <person name="Hunt C."/>
            <person name="Moore K."/>
            <person name="Hurst S.M."/>
            <person name="Lucas M."/>
            <person name="Rochet M."/>
            <person name="Gaillardin C."/>
            <person name="Tallada V.A."/>
            <person name="Garzon A."/>
            <person name="Thode G."/>
            <person name="Daga R.R."/>
            <person name="Cruzado L."/>
            <person name="Jimenez J."/>
            <person name="Sanchez M."/>
            <person name="del Rey F."/>
            <person name="Benito J."/>
            <person name="Dominguez A."/>
            <person name="Revuelta J.L."/>
            <person name="Moreno S."/>
            <person name="Armstrong J."/>
            <person name="Forsburg S.L."/>
            <person name="Cerutti L."/>
            <person name="Lowe T."/>
            <person name="McCombie W.R."/>
            <person name="Paulsen I."/>
            <person name="Potashkin J."/>
            <person name="Shpakovski G.V."/>
            <person name="Ussery D."/>
            <person name="Barrell B.G."/>
            <person name="Nurse P."/>
        </authorList>
    </citation>
    <scope>NUCLEOTIDE SEQUENCE [LARGE SCALE GENOMIC DNA]</scope>
    <source>
        <strain>972 / ATCC 24843</strain>
    </source>
</reference>
<reference key="2">
    <citation type="journal article" date="2006" name="Nat. Biotechnol.">
        <title>ORFeome cloning and global analysis of protein localization in the fission yeast Schizosaccharomyces pombe.</title>
        <authorList>
            <person name="Matsuyama A."/>
            <person name="Arai R."/>
            <person name="Yashiroda Y."/>
            <person name="Shirai A."/>
            <person name="Kamata A."/>
            <person name="Sekido S."/>
            <person name="Kobayashi Y."/>
            <person name="Hashimoto A."/>
            <person name="Hamamoto M."/>
            <person name="Hiraoka Y."/>
            <person name="Horinouchi S."/>
            <person name="Yoshida M."/>
        </authorList>
    </citation>
    <scope>SUBCELLULAR LOCATION [LARGE SCALE ANALYSIS]</scope>
</reference>